<name>EFG_STAAR</name>
<sequence>MAREFSLEKTRNIGIMAHIDAGKTTTTERILYYTGRIHKIGETHEGASQMDWMEQEQDRGITITSAATTAAWEGHRVNIIDTPGHVDFTVEVERSLRVLDGAVTVLDAQSGVEPQTETVWRQATTYGVPRIVFVNKMDKLGANFEYSVSTLHDRLQANAAPIQLPIGAEDEFEAIIDLVEMKCFKYTNDLGTEIEEIEIPEDHLDRAEEARASLIEAVAETSDELMEKYLGDEEISVSELKEAIRQATTNVEFYPVLCGTAFKNKGVQLMLDAVIDYLPSPLDVKPIIGHRASNPEEEVIAKADDSAEFAALAFKVMTDPYVGKLTFFRVYSGTMTSGSYVKNSTKGKRERVGRLLQMHANSRQEIDTVYSGDIAAAVGLKDTGTGDTLCGEKNDIILESMEFPEPVIHLSVEPKSKADQDKMTQALVKLQEEDPTFHAHTDEETGQVIIGGMGELHLDILVDRMKKEFNVECNVGAPMVSYRETFKSSAQVQGKFSRQSGGRGQYGDVHIEFTPNETGAGFEFENAIVGGVVPREYIPSVEAGLKDAMENGVLAGYPLIDVKAKLYDGSYHDVDSSEMAFKIAASLALKEAAKKCDPVILEPMMKVTIEMPEEYMGDIMGDVTSRRGRVDGMEPRGNAQVVNAYVPLSEMFGYATSLRSNTQGRGTYTMYFDHYAEVPKSIAEDIIKKNKGE</sequence>
<comment type="function">
    <text evidence="1">Catalyzes the GTP-dependent ribosomal translocation step during translation elongation. During this step, the ribosome changes from the pre-translocational (PRE) to the post-translocational (POST) state as the newly formed A-site-bound peptidyl-tRNA and P-site-bound deacylated tRNA move to the P and E sites, respectively. Catalyzes the coordinated movement of the two tRNA molecules, the mRNA and conformational changes in the ribosome (By similarity).</text>
</comment>
<comment type="subcellular location">
    <subcellularLocation>
        <location evidence="1">Cytoplasm</location>
    </subcellularLocation>
</comment>
<comment type="similarity">
    <text evidence="2">Belongs to the TRAFAC class translation factor GTPase superfamily. Classic translation factor GTPase family. EF-G/EF-2 subfamily.</text>
</comment>
<evidence type="ECO:0000250" key="1"/>
<evidence type="ECO:0000305" key="2"/>
<reference key="1">
    <citation type="journal article" date="2004" name="Proc. Natl. Acad. Sci. U.S.A.">
        <title>Complete genomes of two clinical Staphylococcus aureus strains: evidence for the rapid evolution of virulence and drug resistance.</title>
        <authorList>
            <person name="Holden M.T.G."/>
            <person name="Feil E.J."/>
            <person name="Lindsay J.A."/>
            <person name="Peacock S.J."/>
            <person name="Day N.P.J."/>
            <person name="Enright M.C."/>
            <person name="Foster T.J."/>
            <person name="Moore C.E."/>
            <person name="Hurst L."/>
            <person name="Atkin R."/>
            <person name="Barron A."/>
            <person name="Bason N."/>
            <person name="Bentley S.D."/>
            <person name="Chillingworth C."/>
            <person name="Chillingworth T."/>
            <person name="Churcher C."/>
            <person name="Clark L."/>
            <person name="Corton C."/>
            <person name="Cronin A."/>
            <person name="Doggett J."/>
            <person name="Dowd L."/>
            <person name="Feltwell T."/>
            <person name="Hance Z."/>
            <person name="Harris B."/>
            <person name="Hauser H."/>
            <person name="Holroyd S."/>
            <person name="Jagels K."/>
            <person name="James K.D."/>
            <person name="Lennard N."/>
            <person name="Line A."/>
            <person name="Mayes R."/>
            <person name="Moule S."/>
            <person name="Mungall K."/>
            <person name="Ormond D."/>
            <person name="Quail M.A."/>
            <person name="Rabbinowitsch E."/>
            <person name="Rutherford K.M."/>
            <person name="Sanders M."/>
            <person name="Sharp S."/>
            <person name="Simmonds M."/>
            <person name="Stevens K."/>
            <person name="Whitehead S."/>
            <person name="Barrell B.G."/>
            <person name="Spratt B.G."/>
            <person name="Parkhill J."/>
        </authorList>
    </citation>
    <scope>NUCLEOTIDE SEQUENCE [LARGE SCALE GENOMIC DNA]</scope>
    <source>
        <strain>MRSA252</strain>
    </source>
</reference>
<keyword id="KW-0963">Cytoplasm</keyword>
<keyword id="KW-0251">Elongation factor</keyword>
<keyword id="KW-0342">GTP-binding</keyword>
<keyword id="KW-0547">Nucleotide-binding</keyword>
<keyword id="KW-0648">Protein biosynthesis</keyword>
<organism>
    <name type="scientific">Staphylococcus aureus (strain MRSA252)</name>
    <dbReference type="NCBI Taxonomy" id="282458"/>
    <lineage>
        <taxon>Bacteria</taxon>
        <taxon>Bacillati</taxon>
        <taxon>Bacillota</taxon>
        <taxon>Bacilli</taxon>
        <taxon>Bacillales</taxon>
        <taxon>Staphylococcaceae</taxon>
        <taxon>Staphylococcus</taxon>
    </lineage>
</organism>
<proteinExistence type="inferred from homology"/>
<dbReference type="EMBL" id="BX571856">
    <property type="protein sequence ID" value="CAG39573.1"/>
    <property type="molecule type" value="Genomic_DNA"/>
</dbReference>
<dbReference type="RefSeq" id="WP_000090315.1">
    <property type="nucleotide sequence ID" value="NC_002952.2"/>
</dbReference>
<dbReference type="SMR" id="Q6GJC1"/>
<dbReference type="KEGG" id="sar:SAR0552"/>
<dbReference type="HOGENOM" id="CLU_002794_4_1_9"/>
<dbReference type="Proteomes" id="UP000000596">
    <property type="component" value="Chromosome"/>
</dbReference>
<dbReference type="GO" id="GO:0005737">
    <property type="term" value="C:cytoplasm"/>
    <property type="evidence" value="ECO:0007669"/>
    <property type="project" value="UniProtKB-SubCell"/>
</dbReference>
<dbReference type="GO" id="GO:0005525">
    <property type="term" value="F:GTP binding"/>
    <property type="evidence" value="ECO:0007669"/>
    <property type="project" value="UniProtKB-UniRule"/>
</dbReference>
<dbReference type="GO" id="GO:0003924">
    <property type="term" value="F:GTPase activity"/>
    <property type="evidence" value="ECO:0007669"/>
    <property type="project" value="InterPro"/>
</dbReference>
<dbReference type="GO" id="GO:0003746">
    <property type="term" value="F:translation elongation factor activity"/>
    <property type="evidence" value="ECO:0007669"/>
    <property type="project" value="UniProtKB-UniRule"/>
</dbReference>
<dbReference type="GO" id="GO:0032790">
    <property type="term" value="P:ribosome disassembly"/>
    <property type="evidence" value="ECO:0007669"/>
    <property type="project" value="TreeGrafter"/>
</dbReference>
<dbReference type="CDD" id="cd01886">
    <property type="entry name" value="EF-G"/>
    <property type="match status" value="1"/>
</dbReference>
<dbReference type="CDD" id="cd16262">
    <property type="entry name" value="EFG_III"/>
    <property type="match status" value="1"/>
</dbReference>
<dbReference type="CDD" id="cd01434">
    <property type="entry name" value="EFG_mtEFG1_IV"/>
    <property type="match status" value="1"/>
</dbReference>
<dbReference type="CDD" id="cd03713">
    <property type="entry name" value="EFG_mtEFG_C"/>
    <property type="match status" value="1"/>
</dbReference>
<dbReference type="CDD" id="cd04088">
    <property type="entry name" value="EFG_mtEFG_II"/>
    <property type="match status" value="1"/>
</dbReference>
<dbReference type="FunFam" id="2.40.30.10:FF:000006">
    <property type="entry name" value="Elongation factor G"/>
    <property type="match status" value="1"/>
</dbReference>
<dbReference type="FunFam" id="3.30.230.10:FF:000003">
    <property type="entry name" value="Elongation factor G"/>
    <property type="match status" value="1"/>
</dbReference>
<dbReference type="FunFam" id="3.30.70.240:FF:000001">
    <property type="entry name" value="Elongation factor G"/>
    <property type="match status" value="1"/>
</dbReference>
<dbReference type="FunFam" id="3.30.70.870:FF:000001">
    <property type="entry name" value="Elongation factor G"/>
    <property type="match status" value="1"/>
</dbReference>
<dbReference type="FunFam" id="3.40.50.300:FF:000029">
    <property type="entry name" value="Elongation factor G"/>
    <property type="match status" value="1"/>
</dbReference>
<dbReference type="Gene3D" id="3.30.230.10">
    <property type="match status" value="1"/>
</dbReference>
<dbReference type="Gene3D" id="3.30.70.240">
    <property type="match status" value="1"/>
</dbReference>
<dbReference type="Gene3D" id="3.30.70.870">
    <property type="entry name" value="Elongation Factor G (Translational Gtpase), domain 3"/>
    <property type="match status" value="1"/>
</dbReference>
<dbReference type="Gene3D" id="3.40.50.300">
    <property type="entry name" value="P-loop containing nucleotide triphosphate hydrolases"/>
    <property type="match status" value="1"/>
</dbReference>
<dbReference type="Gene3D" id="2.40.30.10">
    <property type="entry name" value="Translation factors"/>
    <property type="match status" value="1"/>
</dbReference>
<dbReference type="HAMAP" id="MF_00054_B">
    <property type="entry name" value="EF_G_EF_2_B"/>
    <property type="match status" value="1"/>
</dbReference>
<dbReference type="InterPro" id="IPR041095">
    <property type="entry name" value="EFG_II"/>
</dbReference>
<dbReference type="InterPro" id="IPR009022">
    <property type="entry name" value="EFG_III"/>
</dbReference>
<dbReference type="InterPro" id="IPR035647">
    <property type="entry name" value="EFG_III/V"/>
</dbReference>
<dbReference type="InterPro" id="IPR047872">
    <property type="entry name" value="EFG_IV"/>
</dbReference>
<dbReference type="InterPro" id="IPR035649">
    <property type="entry name" value="EFG_V"/>
</dbReference>
<dbReference type="InterPro" id="IPR000640">
    <property type="entry name" value="EFG_V-like"/>
</dbReference>
<dbReference type="InterPro" id="IPR004161">
    <property type="entry name" value="EFTu-like_2"/>
</dbReference>
<dbReference type="InterPro" id="IPR031157">
    <property type="entry name" value="G_TR_CS"/>
</dbReference>
<dbReference type="InterPro" id="IPR027417">
    <property type="entry name" value="P-loop_NTPase"/>
</dbReference>
<dbReference type="InterPro" id="IPR020568">
    <property type="entry name" value="Ribosomal_Su5_D2-typ_SF"/>
</dbReference>
<dbReference type="InterPro" id="IPR014721">
    <property type="entry name" value="Ribsml_uS5_D2-typ_fold_subgr"/>
</dbReference>
<dbReference type="InterPro" id="IPR005225">
    <property type="entry name" value="Small_GTP-bd"/>
</dbReference>
<dbReference type="InterPro" id="IPR000795">
    <property type="entry name" value="T_Tr_GTP-bd_dom"/>
</dbReference>
<dbReference type="InterPro" id="IPR009000">
    <property type="entry name" value="Transl_B-barrel_sf"/>
</dbReference>
<dbReference type="InterPro" id="IPR004540">
    <property type="entry name" value="Transl_elong_EFG/EF2"/>
</dbReference>
<dbReference type="InterPro" id="IPR005517">
    <property type="entry name" value="Transl_elong_EFG/EF2_IV"/>
</dbReference>
<dbReference type="NCBIfam" id="TIGR00484">
    <property type="entry name" value="EF-G"/>
    <property type="match status" value="1"/>
</dbReference>
<dbReference type="NCBIfam" id="NF009379">
    <property type="entry name" value="PRK12740.1-3"/>
    <property type="match status" value="1"/>
</dbReference>
<dbReference type="NCBIfam" id="NF009381">
    <property type="entry name" value="PRK12740.1-5"/>
    <property type="match status" value="1"/>
</dbReference>
<dbReference type="NCBIfam" id="TIGR00231">
    <property type="entry name" value="small_GTP"/>
    <property type="match status" value="1"/>
</dbReference>
<dbReference type="PANTHER" id="PTHR43261:SF1">
    <property type="entry name" value="RIBOSOME-RELEASING FACTOR 2, MITOCHONDRIAL"/>
    <property type="match status" value="1"/>
</dbReference>
<dbReference type="PANTHER" id="PTHR43261">
    <property type="entry name" value="TRANSLATION ELONGATION FACTOR G-RELATED"/>
    <property type="match status" value="1"/>
</dbReference>
<dbReference type="Pfam" id="PF00679">
    <property type="entry name" value="EFG_C"/>
    <property type="match status" value="1"/>
</dbReference>
<dbReference type="Pfam" id="PF14492">
    <property type="entry name" value="EFG_III"/>
    <property type="match status" value="1"/>
</dbReference>
<dbReference type="Pfam" id="PF03764">
    <property type="entry name" value="EFG_IV"/>
    <property type="match status" value="1"/>
</dbReference>
<dbReference type="Pfam" id="PF00009">
    <property type="entry name" value="GTP_EFTU"/>
    <property type="match status" value="1"/>
</dbReference>
<dbReference type="Pfam" id="PF03144">
    <property type="entry name" value="GTP_EFTU_D2"/>
    <property type="match status" value="1"/>
</dbReference>
<dbReference type="PRINTS" id="PR00315">
    <property type="entry name" value="ELONGATNFCT"/>
</dbReference>
<dbReference type="SMART" id="SM00838">
    <property type="entry name" value="EFG_C"/>
    <property type="match status" value="1"/>
</dbReference>
<dbReference type="SMART" id="SM00889">
    <property type="entry name" value="EFG_IV"/>
    <property type="match status" value="1"/>
</dbReference>
<dbReference type="SUPFAM" id="SSF54980">
    <property type="entry name" value="EF-G C-terminal domain-like"/>
    <property type="match status" value="2"/>
</dbReference>
<dbReference type="SUPFAM" id="SSF52540">
    <property type="entry name" value="P-loop containing nucleoside triphosphate hydrolases"/>
    <property type="match status" value="1"/>
</dbReference>
<dbReference type="SUPFAM" id="SSF54211">
    <property type="entry name" value="Ribosomal protein S5 domain 2-like"/>
    <property type="match status" value="1"/>
</dbReference>
<dbReference type="SUPFAM" id="SSF50447">
    <property type="entry name" value="Translation proteins"/>
    <property type="match status" value="1"/>
</dbReference>
<dbReference type="PROSITE" id="PS00301">
    <property type="entry name" value="G_TR_1"/>
    <property type="match status" value="1"/>
</dbReference>
<dbReference type="PROSITE" id="PS51722">
    <property type="entry name" value="G_TR_2"/>
    <property type="match status" value="1"/>
</dbReference>
<accession>Q6GJC1</accession>
<protein>
    <recommendedName>
        <fullName>Elongation factor G</fullName>
        <shortName>EF-G</shortName>
    </recommendedName>
</protein>
<gene>
    <name type="primary">fusA</name>
    <name type="synonym">fus</name>
    <name type="ordered locus">SAR0552</name>
</gene>
<feature type="initiator methionine" description="Removed" evidence="1">
    <location>
        <position position="1"/>
    </location>
</feature>
<feature type="chain" id="PRO_0000091217" description="Elongation factor G">
    <location>
        <begin position="2"/>
        <end position="693"/>
    </location>
</feature>
<feature type="domain" description="tr-type G">
    <location>
        <begin position="8"/>
        <end position="282"/>
    </location>
</feature>
<feature type="binding site" evidence="1">
    <location>
        <begin position="17"/>
        <end position="24"/>
    </location>
    <ligand>
        <name>GTP</name>
        <dbReference type="ChEBI" id="CHEBI:37565"/>
    </ligand>
</feature>
<feature type="binding site" evidence="1">
    <location>
        <begin position="81"/>
        <end position="85"/>
    </location>
    <ligand>
        <name>GTP</name>
        <dbReference type="ChEBI" id="CHEBI:37565"/>
    </ligand>
</feature>
<feature type="binding site" evidence="1">
    <location>
        <begin position="135"/>
        <end position="138"/>
    </location>
    <ligand>
        <name>GTP</name>
        <dbReference type="ChEBI" id="CHEBI:37565"/>
    </ligand>
</feature>